<sequence>MNINFSKDDITGLPKSTKEEDENDFSSLDYSDLFMDVEIGRGSFGQVQKASYFGTDVAVKQLSTLVSIDPDYFKFMLREIKILKGMRHPNIVQYIGACCHEGRYMIVTEYIKGGDLHQFIKARGVSNISWTLRMKLALDIASAFSYLHSKKVIFRDLKAKNILVDEIGDGLYRAKVIDFGFARIFDGKDTNNLTICGSENTMSPEVIVGSSYNDSCDVYSYGVLLLELICGSRVVKTQLKRTPMNAFDMNLEKAEHLAPESCPRAFMDLAKWCCSYNPKDRPTFKIVVEGLKVLTNQQLKDLPVKGKSKPYIDPDEDSFIDPNDDSNNNNNSENNNNNNDNSNENNENNNENNNNSNENNNKKNKNGSGGDISGSSVIIKTDEEESFNSVVYKEHAVAQPLPNIDYGGQNKRQNNIFNPSFFTPPPNSKSMMDLKQSSAVDEDEDEDEDDVPSELLTSLTVNDIRYSNPKSFAATISTPNLNYATALDQDPPKPLSQSACATVLGGIPPMQPKKKPNNKNKKKKKKL</sequence>
<dbReference type="EC" id="2.7.11.1"/>
<dbReference type="EMBL" id="AAFI02000006">
    <property type="protein sequence ID" value="EAL71633.1"/>
    <property type="molecule type" value="Genomic_DNA"/>
</dbReference>
<dbReference type="RefSeq" id="XP_645575.1">
    <property type="nucleotide sequence ID" value="XM_640483.1"/>
</dbReference>
<dbReference type="SMR" id="Q86AE1"/>
<dbReference type="FunCoup" id="Q86AE1">
    <property type="interactions" value="10"/>
</dbReference>
<dbReference type="STRING" id="44689.Q86AE1"/>
<dbReference type="PaxDb" id="44689-DDB0229853"/>
<dbReference type="EnsemblProtists" id="EAL71633">
    <property type="protein sequence ID" value="EAL71633"/>
    <property type="gene ID" value="DDB_G0271538"/>
</dbReference>
<dbReference type="GeneID" id="8618028"/>
<dbReference type="KEGG" id="ddi:DDB_G0271538"/>
<dbReference type="dictyBase" id="DDB_G0271538"/>
<dbReference type="VEuPathDB" id="AmoebaDB:DDB_G0271538"/>
<dbReference type="eggNOG" id="ENOG502QTCP">
    <property type="taxonomic scope" value="Eukaryota"/>
</dbReference>
<dbReference type="HOGENOM" id="CLU_517243_0_0_1"/>
<dbReference type="InParanoid" id="Q86AE1"/>
<dbReference type="OMA" id="ELICGTR"/>
<dbReference type="PhylomeDB" id="Q86AE1"/>
<dbReference type="PRO" id="PR:Q86AE1"/>
<dbReference type="Proteomes" id="UP000002195">
    <property type="component" value="Chromosome 2"/>
</dbReference>
<dbReference type="GO" id="GO:0005776">
    <property type="term" value="C:autophagosome"/>
    <property type="evidence" value="ECO:0000318"/>
    <property type="project" value="GO_Central"/>
</dbReference>
<dbReference type="GO" id="GO:0005737">
    <property type="term" value="C:cytoplasm"/>
    <property type="evidence" value="ECO:0000318"/>
    <property type="project" value="GO_Central"/>
</dbReference>
<dbReference type="GO" id="GO:0005829">
    <property type="term" value="C:cytosol"/>
    <property type="evidence" value="ECO:0000318"/>
    <property type="project" value="GO_Central"/>
</dbReference>
<dbReference type="GO" id="GO:0000407">
    <property type="term" value="C:phagophore assembly site"/>
    <property type="evidence" value="ECO:0000318"/>
    <property type="project" value="GO_Central"/>
</dbReference>
<dbReference type="GO" id="GO:0034045">
    <property type="term" value="C:phagophore assembly site membrane"/>
    <property type="evidence" value="ECO:0000318"/>
    <property type="project" value="GO_Central"/>
</dbReference>
<dbReference type="GO" id="GO:0005524">
    <property type="term" value="F:ATP binding"/>
    <property type="evidence" value="ECO:0007669"/>
    <property type="project" value="UniProtKB-KW"/>
</dbReference>
<dbReference type="GO" id="GO:0106310">
    <property type="term" value="F:protein serine kinase activity"/>
    <property type="evidence" value="ECO:0007669"/>
    <property type="project" value="RHEA"/>
</dbReference>
<dbReference type="GO" id="GO:0004674">
    <property type="term" value="F:protein serine/threonine kinase activity"/>
    <property type="evidence" value="ECO:0000318"/>
    <property type="project" value="GO_Central"/>
</dbReference>
<dbReference type="GO" id="GO:0000045">
    <property type="term" value="P:autophagosome assembly"/>
    <property type="evidence" value="ECO:0000318"/>
    <property type="project" value="GO_Central"/>
</dbReference>
<dbReference type="GO" id="GO:0000423">
    <property type="term" value="P:mitophagy"/>
    <property type="evidence" value="ECO:0000318"/>
    <property type="project" value="GO_Central"/>
</dbReference>
<dbReference type="GO" id="GO:0034727">
    <property type="term" value="P:piecemeal microautophagy of the nucleus"/>
    <property type="evidence" value="ECO:0000318"/>
    <property type="project" value="GO_Central"/>
</dbReference>
<dbReference type="GO" id="GO:0010506">
    <property type="term" value="P:regulation of autophagy"/>
    <property type="evidence" value="ECO:0000318"/>
    <property type="project" value="GO_Central"/>
</dbReference>
<dbReference type="GO" id="GO:0042594">
    <property type="term" value="P:response to starvation"/>
    <property type="evidence" value="ECO:0000318"/>
    <property type="project" value="GO_Central"/>
</dbReference>
<dbReference type="GO" id="GO:0061709">
    <property type="term" value="P:reticulophagy"/>
    <property type="evidence" value="ECO:0000318"/>
    <property type="project" value="GO_Central"/>
</dbReference>
<dbReference type="CDD" id="cd13999">
    <property type="entry name" value="STKc_MAP3K-like"/>
    <property type="match status" value="1"/>
</dbReference>
<dbReference type="FunFam" id="3.30.200.20:FF:000180">
    <property type="entry name" value="serine/threonine-protein kinase STY46-like"/>
    <property type="match status" value="1"/>
</dbReference>
<dbReference type="Gene3D" id="3.30.200.20">
    <property type="entry name" value="Phosphorylase Kinase, domain 1"/>
    <property type="match status" value="1"/>
</dbReference>
<dbReference type="Gene3D" id="1.10.510.10">
    <property type="entry name" value="Transferase(Phosphotransferase) domain 1"/>
    <property type="match status" value="1"/>
</dbReference>
<dbReference type="InterPro" id="IPR050940">
    <property type="entry name" value="Actin_reg-Ser/Thr_kinase"/>
</dbReference>
<dbReference type="InterPro" id="IPR011009">
    <property type="entry name" value="Kinase-like_dom_sf"/>
</dbReference>
<dbReference type="InterPro" id="IPR000719">
    <property type="entry name" value="Prot_kinase_dom"/>
</dbReference>
<dbReference type="InterPro" id="IPR017441">
    <property type="entry name" value="Protein_kinase_ATP_BS"/>
</dbReference>
<dbReference type="InterPro" id="IPR001245">
    <property type="entry name" value="Ser-Thr/Tyr_kinase_cat_dom"/>
</dbReference>
<dbReference type="PANTHER" id="PTHR46485:SF5">
    <property type="entry name" value="CENTER DIVIDER, ISOFORM A"/>
    <property type="match status" value="1"/>
</dbReference>
<dbReference type="PANTHER" id="PTHR46485">
    <property type="entry name" value="LIM DOMAIN KINASE 1"/>
    <property type="match status" value="1"/>
</dbReference>
<dbReference type="Pfam" id="PF00069">
    <property type="entry name" value="Pkinase"/>
    <property type="match status" value="1"/>
</dbReference>
<dbReference type="PRINTS" id="PR00109">
    <property type="entry name" value="TYRKINASE"/>
</dbReference>
<dbReference type="SMART" id="SM00220">
    <property type="entry name" value="S_TKc"/>
    <property type="match status" value="1"/>
</dbReference>
<dbReference type="SUPFAM" id="SSF56112">
    <property type="entry name" value="Protein kinase-like (PK-like)"/>
    <property type="match status" value="1"/>
</dbReference>
<dbReference type="PROSITE" id="PS00107">
    <property type="entry name" value="PROTEIN_KINASE_ATP"/>
    <property type="match status" value="1"/>
</dbReference>
<dbReference type="PROSITE" id="PS50011">
    <property type="entry name" value="PROTEIN_KINASE_DOM"/>
    <property type="match status" value="1"/>
</dbReference>
<accession>Q86AE1</accession>
<accession>Q55AX1</accession>
<evidence type="ECO:0000255" key="1">
    <source>
        <dbReference type="PROSITE-ProRule" id="PRU00159"/>
    </source>
</evidence>
<evidence type="ECO:0000256" key="2">
    <source>
        <dbReference type="SAM" id="MobiDB-lite"/>
    </source>
</evidence>
<evidence type="ECO:0000305" key="3"/>
<feature type="chain" id="PRO_0000355162" description="Probable serine/threonine-protein kinase DDB_G0271538">
    <location>
        <begin position="1"/>
        <end position="527"/>
    </location>
</feature>
<feature type="domain" description="Protein kinase" evidence="1">
    <location>
        <begin position="33"/>
        <end position="294"/>
    </location>
</feature>
<feature type="region of interest" description="Disordered" evidence="2">
    <location>
        <begin position="1"/>
        <end position="24"/>
    </location>
</feature>
<feature type="region of interest" description="Disordered" evidence="2">
    <location>
        <begin position="304"/>
        <end position="375"/>
    </location>
</feature>
<feature type="region of interest" description="Disordered" evidence="2">
    <location>
        <begin position="422"/>
        <end position="452"/>
    </location>
</feature>
<feature type="region of interest" description="Disordered" evidence="2">
    <location>
        <begin position="485"/>
        <end position="527"/>
    </location>
</feature>
<feature type="compositionally biased region" description="Basic and acidic residues" evidence="2">
    <location>
        <begin position="1"/>
        <end position="10"/>
    </location>
</feature>
<feature type="compositionally biased region" description="Acidic residues" evidence="2">
    <location>
        <begin position="313"/>
        <end position="324"/>
    </location>
</feature>
<feature type="compositionally biased region" description="Low complexity" evidence="2">
    <location>
        <begin position="325"/>
        <end position="359"/>
    </location>
</feature>
<feature type="compositionally biased region" description="Acidic residues" evidence="2">
    <location>
        <begin position="440"/>
        <end position="452"/>
    </location>
</feature>
<feature type="compositionally biased region" description="Basic residues" evidence="2">
    <location>
        <begin position="512"/>
        <end position="527"/>
    </location>
</feature>
<feature type="active site" description="Proton acceptor" evidence="1">
    <location>
        <position position="156"/>
    </location>
</feature>
<feature type="binding site" evidence="1">
    <location>
        <begin position="39"/>
        <end position="47"/>
    </location>
    <ligand>
        <name>ATP</name>
        <dbReference type="ChEBI" id="CHEBI:30616"/>
    </ligand>
</feature>
<feature type="binding site" evidence="1">
    <location>
        <position position="60"/>
    </location>
    <ligand>
        <name>ATP</name>
        <dbReference type="ChEBI" id="CHEBI:30616"/>
    </ligand>
</feature>
<keyword id="KW-0067">ATP-binding</keyword>
<keyword id="KW-0418">Kinase</keyword>
<keyword id="KW-0547">Nucleotide-binding</keyword>
<keyword id="KW-1185">Reference proteome</keyword>
<keyword id="KW-0723">Serine/threonine-protein kinase</keyword>
<keyword id="KW-0808">Transferase</keyword>
<proteinExistence type="inferred from homology"/>
<name>Y9853_DICDI</name>
<comment type="catalytic activity">
    <reaction>
        <text>L-seryl-[protein] + ATP = O-phospho-L-seryl-[protein] + ADP + H(+)</text>
        <dbReference type="Rhea" id="RHEA:17989"/>
        <dbReference type="Rhea" id="RHEA-COMP:9863"/>
        <dbReference type="Rhea" id="RHEA-COMP:11604"/>
        <dbReference type="ChEBI" id="CHEBI:15378"/>
        <dbReference type="ChEBI" id="CHEBI:29999"/>
        <dbReference type="ChEBI" id="CHEBI:30616"/>
        <dbReference type="ChEBI" id="CHEBI:83421"/>
        <dbReference type="ChEBI" id="CHEBI:456216"/>
        <dbReference type="EC" id="2.7.11.1"/>
    </reaction>
</comment>
<comment type="catalytic activity">
    <reaction>
        <text>L-threonyl-[protein] + ATP = O-phospho-L-threonyl-[protein] + ADP + H(+)</text>
        <dbReference type="Rhea" id="RHEA:46608"/>
        <dbReference type="Rhea" id="RHEA-COMP:11060"/>
        <dbReference type="Rhea" id="RHEA-COMP:11605"/>
        <dbReference type="ChEBI" id="CHEBI:15378"/>
        <dbReference type="ChEBI" id="CHEBI:30013"/>
        <dbReference type="ChEBI" id="CHEBI:30616"/>
        <dbReference type="ChEBI" id="CHEBI:61977"/>
        <dbReference type="ChEBI" id="CHEBI:456216"/>
        <dbReference type="EC" id="2.7.11.1"/>
    </reaction>
</comment>
<comment type="similarity">
    <text evidence="3">Belongs to the protein kinase superfamily. TKL Ser/Thr protein kinase family.</text>
</comment>
<reference key="1">
    <citation type="journal article" date="2002" name="Nature">
        <title>Sequence and analysis of chromosome 2 of Dictyostelium discoideum.</title>
        <authorList>
            <person name="Gloeckner G."/>
            <person name="Eichinger L."/>
            <person name="Szafranski K."/>
            <person name="Pachebat J.A."/>
            <person name="Bankier A.T."/>
            <person name="Dear P.H."/>
            <person name="Lehmann R."/>
            <person name="Baumgart C."/>
            <person name="Parra G."/>
            <person name="Abril J.F."/>
            <person name="Guigo R."/>
            <person name="Kumpf K."/>
            <person name="Tunggal B."/>
            <person name="Cox E.C."/>
            <person name="Quail M.A."/>
            <person name="Platzer M."/>
            <person name="Rosenthal A."/>
            <person name="Noegel A.A."/>
        </authorList>
    </citation>
    <scope>NUCLEOTIDE SEQUENCE [LARGE SCALE GENOMIC DNA]</scope>
    <source>
        <strain>AX4</strain>
    </source>
</reference>
<reference key="2">
    <citation type="journal article" date="2005" name="Nature">
        <title>The genome of the social amoeba Dictyostelium discoideum.</title>
        <authorList>
            <person name="Eichinger L."/>
            <person name="Pachebat J.A."/>
            <person name="Gloeckner G."/>
            <person name="Rajandream M.A."/>
            <person name="Sucgang R."/>
            <person name="Berriman M."/>
            <person name="Song J."/>
            <person name="Olsen R."/>
            <person name="Szafranski K."/>
            <person name="Xu Q."/>
            <person name="Tunggal B."/>
            <person name="Kummerfeld S."/>
            <person name="Madera M."/>
            <person name="Konfortov B.A."/>
            <person name="Rivero F."/>
            <person name="Bankier A.T."/>
            <person name="Lehmann R."/>
            <person name="Hamlin N."/>
            <person name="Davies R."/>
            <person name="Gaudet P."/>
            <person name="Fey P."/>
            <person name="Pilcher K."/>
            <person name="Chen G."/>
            <person name="Saunders D."/>
            <person name="Sodergren E.J."/>
            <person name="Davis P."/>
            <person name="Kerhornou A."/>
            <person name="Nie X."/>
            <person name="Hall N."/>
            <person name="Anjard C."/>
            <person name="Hemphill L."/>
            <person name="Bason N."/>
            <person name="Farbrother P."/>
            <person name="Desany B."/>
            <person name="Just E."/>
            <person name="Morio T."/>
            <person name="Rost R."/>
            <person name="Churcher C.M."/>
            <person name="Cooper J."/>
            <person name="Haydock S."/>
            <person name="van Driessche N."/>
            <person name="Cronin A."/>
            <person name="Goodhead I."/>
            <person name="Muzny D.M."/>
            <person name="Mourier T."/>
            <person name="Pain A."/>
            <person name="Lu M."/>
            <person name="Harper D."/>
            <person name="Lindsay R."/>
            <person name="Hauser H."/>
            <person name="James K.D."/>
            <person name="Quiles M."/>
            <person name="Madan Babu M."/>
            <person name="Saito T."/>
            <person name="Buchrieser C."/>
            <person name="Wardroper A."/>
            <person name="Felder M."/>
            <person name="Thangavelu M."/>
            <person name="Johnson D."/>
            <person name="Knights A."/>
            <person name="Loulseged H."/>
            <person name="Mungall K.L."/>
            <person name="Oliver K."/>
            <person name="Price C."/>
            <person name="Quail M.A."/>
            <person name="Urushihara H."/>
            <person name="Hernandez J."/>
            <person name="Rabbinowitsch E."/>
            <person name="Steffen D."/>
            <person name="Sanders M."/>
            <person name="Ma J."/>
            <person name="Kohara Y."/>
            <person name="Sharp S."/>
            <person name="Simmonds M.N."/>
            <person name="Spiegler S."/>
            <person name="Tivey A."/>
            <person name="Sugano S."/>
            <person name="White B."/>
            <person name="Walker D."/>
            <person name="Woodward J.R."/>
            <person name="Winckler T."/>
            <person name="Tanaka Y."/>
            <person name="Shaulsky G."/>
            <person name="Schleicher M."/>
            <person name="Weinstock G.M."/>
            <person name="Rosenthal A."/>
            <person name="Cox E.C."/>
            <person name="Chisholm R.L."/>
            <person name="Gibbs R.A."/>
            <person name="Loomis W.F."/>
            <person name="Platzer M."/>
            <person name="Kay R.R."/>
            <person name="Williams J.G."/>
            <person name="Dear P.H."/>
            <person name="Noegel A.A."/>
            <person name="Barrell B.G."/>
            <person name="Kuspa A."/>
        </authorList>
    </citation>
    <scope>NUCLEOTIDE SEQUENCE [LARGE SCALE GENOMIC DNA]</scope>
    <source>
        <strain>AX4</strain>
    </source>
</reference>
<reference key="3">
    <citation type="journal article" date="2003" name="Eukaryot. Cell">
        <title>Changing patterns of gene expression in Dictyostelium prestalk cell subtypes recognized by in situ hybridization with genes from microarray analyses.</title>
        <authorList>
            <person name="Maeda M."/>
            <person name="Sakamoto H."/>
            <person name="Iranfar N."/>
            <person name="Fuller D."/>
            <person name="Maruo T."/>
            <person name="Ogihara S."/>
            <person name="Morio T."/>
            <person name="Urushihara H."/>
            <person name="Tanaka Y."/>
            <person name="Loomis W.F."/>
        </authorList>
    </citation>
    <scope>IDENTIFICATION</scope>
</reference>
<gene>
    <name type="ORF">DDB_G0271538</name>
</gene>
<organism>
    <name type="scientific">Dictyostelium discoideum</name>
    <name type="common">Social amoeba</name>
    <dbReference type="NCBI Taxonomy" id="44689"/>
    <lineage>
        <taxon>Eukaryota</taxon>
        <taxon>Amoebozoa</taxon>
        <taxon>Evosea</taxon>
        <taxon>Eumycetozoa</taxon>
        <taxon>Dictyostelia</taxon>
        <taxon>Dictyosteliales</taxon>
        <taxon>Dictyosteliaceae</taxon>
        <taxon>Dictyostelium</taxon>
    </lineage>
</organism>
<protein>
    <recommendedName>
        <fullName>Probable serine/threonine-protein kinase DDB_G0271538</fullName>
        <ecNumber>2.7.11.1</ecNumber>
    </recommendedName>
</protein>